<sequence>MSDLASLDTSQHPYLPQSASLLFDAKAKANLSFEQIAQHIGRNEVATAAIFYGQAKASKEDIIKLAELLRLPATALEMQMGGFPDRGRSVEMPPREPLIYRLYEIVQNYGYAYKAILNEKFGDGIMSAISFSTNVEKETDEDGNNWAIITMRGKW</sequence>
<comment type="function">
    <text evidence="1">Catalyzes the reaction of cyanate with bicarbonate to produce ammonia and carbon dioxide.</text>
</comment>
<comment type="catalytic activity">
    <reaction evidence="1">
        <text>cyanate + hydrogencarbonate + 3 H(+) = NH4(+) + 2 CO2</text>
        <dbReference type="Rhea" id="RHEA:11120"/>
        <dbReference type="ChEBI" id="CHEBI:15378"/>
        <dbReference type="ChEBI" id="CHEBI:16526"/>
        <dbReference type="ChEBI" id="CHEBI:17544"/>
        <dbReference type="ChEBI" id="CHEBI:28938"/>
        <dbReference type="ChEBI" id="CHEBI:29195"/>
        <dbReference type="EC" id="4.2.1.104"/>
    </reaction>
</comment>
<comment type="similarity">
    <text evidence="1">Belongs to the cyanase family.</text>
</comment>
<gene>
    <name evidence="1" type="primary">CYN1</name>
    <name type="ORF">CPC735_018440</name>
</gene>
<dbReference type="EC" id="4.2.1.104" evidence="1"/>
<dbReference type="EMBL" id="ACFW01000043">
    <property type="protein sequence ID" value="EER25240.1"/>
    <property type="molecule type" value="Genomic_DNA"/>
</dbReference>
<dbReference type="RefSeq" id="XP_003067385.1">
    <property type="nucleotide sequence ID" value="XM_003067339.1"/>
</dbReference>
<dbReference type="SMR" id="C5PDS9"/>
<dbReference type="GeneID" id="9692856"/>
<dbReference type="KEGG" id="cpw:9692856"/>
<dbReference type="VEuPathDB" id="FungiDB:CPC735_018440"/>
<dbReference type="HOGENOM" id="CLU_103452_0_0_1"/>
<dbReference type="OrthoDB" id="10019422at2759"/>
<dbReference type="Proteomes" id="UP000009084">
    <property type="component" value="Unassembled WGS sequence"/>
</dbReference>
<dbReference type="GO" id="GO:0008824">
    <property type="term" value="F:cyanate hydratase activity"/>
    <property type="evidence" value="ECO:0007669"/>
    <property type="project" value="UniProtKB-UniRule"/>
</dbReference>
<dbReference type="GO" id="GO:0003677">
    <property type="term" value="F:DNA binding"/>
    <property type="evidence" value="ECO:0007669"/>
    <property type="project" value="InterPro"/>
</dbReference>
<dbReference type="GO" id="GO:0009439">
    <property type="term" value="P:cyanate metabolic process"/>
    <property type="evidence" value="ECO:0007669"/>
    <property type="project" value="UniProtKB-UniRule"/>
</dbReference>
<dbReference type="CDD" id="cd00559">
    <property type="entry name" value="Cyanase_C"/>
    <property type="match status" value="1"/>
</dbReference>
<dbReference type="Gene3D" id="3.30.1160.10">
    <property type="entry name" value="Cyanate lyase, C-terminal domain"/>
    <property type="match status" value="1"/>
</dbReference>
<dbReference type="Gene3D" id="1.10.260.40">
    <property type="entry name" value="lambda repressor-like DNA-binding domains"/>
    <property type="match status" value="1"/>
</dbReference>
<dbReference type="HAMAP" id="MF_00535">
    <property type="entry name" value="Cyanate_hydrat"/>
    <property type="match status" value="1"/>
</dbReference>
<dbReference type="InterPro" id="IPR008076">
    <property type="entry name" value="Cyanase"/>
</dbReference>
<dbReference type="InterPro" id="IPR003712">
    <property type="entry name" value="Cyanate_lyase_C"/>
</dbReference>
<dbReference type="InterPro" id="IPR036581">
    <property type="entry name" value="Cyanate_lyase_C_sf"/>
</dbReference>
<dbReference type="InterPro" id="IPR010982">
    <property type="entry name" value="Lambda_DNA-bd_dom_sf"/>
</dbReference>
<dbReference type="NCBIfam" id="TIGR00673">
    <property type="entry name" value="cynS"/>
    <property type="match status" value="1"/>
</dbReference>
<dbReference type="PANTHER" id="PTHR34186">
    <property type="entry name" value="CYANATE HYDRATASE"/>
    <property type="match status" value="1"/>
</dbReference>
<dbReference type="PANTHER" id="PTHR34186:SF2">
    <property type="entry name" value="CYANATE HYDRATASE"/>
    <property type="match status" value="1"/>
</dbReference>
<dbReference type="Pfam" id="PF02560">
    <property type="entry name" value="Cyanate_lyase"/>
    <property type="match status" value="1"/>
</dbReference>
<dbReference type="PIRSF" id="PIRSF001263">
    <property type="entry name" value="Cyanate_hydratas"/>
    <property type="match status" value="1"/>
</dbReference>
<dbReference type="PRINTS" id="PR01693">
    <property type="entry name" value="CYANASE"/>
</dbReference>
<dbReference type="SMART" id="SM01116">
    <property type="entry name" value="Cyanate_lyase"/>
    <property type="match status" value="1"/>
</dbReference>
<dbReference type="SUPFAM" id="SSF55234">
    <property type="entry name" value="Cyanase C-terminal domain"/>
    <property type="match status" value="1"/>
</dbReference>
<dbReference type="SUPFAM" id="SSF47413">
    <property type="entry name" value="lambda repressor-like DNA-binding domains"/>
    <property type="match status" value="1"/>
</dbReference>
<evidence type="ECO:0000255" key="1">
    <source>
        <dbReference type="HAMAP-Rule" id="MF_03139"/>
    </source>
</evidence>
<name>CYNS_COCP7</name>
<organism>
    <name type="scientific">Coccidioides posadasii (strain C735)</name>
    <name type="common">Valley fever fungus</name>
    <dbReference type="NCBI Taxonomy" id="222929"/>
    <lineage>
        <taxon>Eukaryota</taxon>
        <taxon>Fungi</taxon>
        <taxon>Dikarya</taxon>
        <taxon>Ascomycota</taxon>
        <taxon>Pezizomycotina</taxon>
        <taxon>Eurotiomycetes</taxon>
        <taxon>Eurotiomycetidae</taxon>
        <taxon>Onygenales</taxon>
        <taxon>Onygenaceae</taxon>
        <taxon>Coccidioides</taxon>
    </lineage>
</organism>
<keyword id="KW-0456">Lyase</keyword>
<feature type="chain" id="PRO_0000403248" description="Cyanate hydratase">
    <location>
        <begin position="1"/>
        <end position="155"/>
    </location>
</feature>
<feature type="active site" evidence="1">
    <location>
        <position position="101"/>
    </location>
</feature>
<feature type="active site" evidence="1">
    <location>
        <position position="104"/>
    </location>
</feature>
<feature type="active site" evidence="1">
    <location>
        <position position="127"/>
    </location>
</feature>
<reference key="1">
    <citation type="journal article" date="2009" name="Genome Res.">
        <title>Comparative genomic analyses of the human fungal pathogens Coccidioides and their relatives.</title>
        <authorList>
            <person name="Sharpton T.J."/>
            <person name="Stajich J.E."/>
            <person name="Rounsley S.D."/>
            <person name="Gardner M.J."/>
            <person name="Wortman J.R."/>
            <person name="Jordar V.S."/>
            <person name="Maiti R."/>
            <person name="Kodira C.D."/>
            <person name="Neafsey D.E."/>
            <person name="Zeng Q."/>
            <person name="Hung C.-Y."/>
            <person name="McMahan C."/>
            <person name="Muszewska A."/>
            <person name="Grynberg M."/>
            <person name="Mandel M.A."/>
            <person name="Kellner E.M."/>
            <person name="Barker B.M."/>
            <person name="Galgiani J.N."/>
            <person name="Orbach M.J."/>
            <person name="Kirkland T.N."/>
            <person name="Cole G.T."/>
            <person name="Henn M.R."/>
            <person name="Birren B.W."/>
            <person name="Taylor J.W."/>
        </authorList>
    </citation>
    <scope>NUCLEOTIDE SEQUENCE [LARGE SCALE GENOMIC DNA]</scope>
    <source>
        <strain>C735</strain>
    </source>
</reference>
<proteinExistence type="inferred from homology"/>
<accession>C5PDS9</accession>
<protein>
    <recommendedName>
        <fullName evidence="1">Cyanate hydratase</fullName>
        <shortName evidence="1">Cyanase</shortName>
        <ecNumber evidence="1">4.2.1.104</ecNumber>
    </recommendedName>
    <alternativeName>
        <fullName evidence="1">Cyanate hydrolase</fullName>
    </alternativeName>
    <alternativeName>
        <fullName evidence="1">Cyanate lyase</fullName>
    </alternativeName>
</protein>